<reference key="1">
    <citation type="journal article" date="2009" name="PLoS Genet.">
        <title>Organised genome dynamics in the Escherichia coli species results in highly diverse adaptive paths.</title>
        <authorList>
            <person name="Touchon M."/>
            <person name="Hoede C."/>
            <person name="Tenaillon O."/>
            <person name="Barbe V."/>
            <person name="Baeriswyl S."/>
            <person name="Bidet P."/>
            <person name="Bingen E."/>
            <person name="Bonacorsi S."/>
            <person name="Bouchier C."/>
            <person name="Bouvet O."/>
            <person name="Calteau A."/>
            <person name="Chiapello H."/>
            <person name="Clermont O."/>
            <person name="Cruveiller S."/>
            <person name="Danchin A."/>
            <person name="Diard M."/>
            <person name="Dossat C."/>
            <person name="Karoui M.E."/>
            <person name="Frapy E."/>
            <person name="Garry L."/>
            <person name="Ghigo J.M."/>
            <person name="Gilles A.M."/>
            <person name="Johnson J."/>
            <person name="Le Bouguenec C."/>
            <person name="Lescat M."/>
            <person name="Mangenot S."/>
            <person name="Martinez-Jehanne V."/>
            <person name="Matic I."/>
            <person name="Nassif X."/>
            <person name="Oztas S."/>
            <person name="Petit M.A."/>
            <person name="Pichon C."/>
            <person name="Rouy Z."/>
            <person name="Ruf C.S."/>
            <person name="Schneider D."/>
            <person name="Tourret J."/>
            <person name="Vacherie B."/>
            <person name="Vallenet D."/>
            <person name="Medigue C."/>
            <person name="Rocha E.P.C."/>
            <person name="Denamur E."/>
        </authorList>
    </citation>
    <scope>NUCLEOTIDE SEQUENCE [LARGE SCALE GENOMIC DNA]</scope>
    <source>
        <strain>IAI39 / ExPEC</strain>
    </source>
</reference>
<gene>
    <name evidence="1" type="primary">idi</name>
    <name type="ordered locus">ECIAI39_3305</name>
</gene>
<name>IDI_ECO7I</name>
<accession>B7NW30</accession>
<proteinExistence type="inferred from homology"/>
<comment type="function">
    <text evidence="1">Catalyzes the 1,3-allylic rearrangement of the homoallylic substrate isopentenyl (IPP) to its highly electrophilic allylic isomer, dimethylallyl diphosphate (DMAPP).</text>
</comment>
<comment type="catalytic activity">
    <reaction evidence="1">
        <text>isopentenyl diphosphate = dimethylallyl diphosphate</text>
        <dbReference type="Rhea" id="RHEA:23284"/>
        <dbReference type="ChEBI" id="CHEBI:57623"/>
        <dbReference type="ChEBI" id="CHEBI:128769"/>
        <dbReference type="EC" id="5.3.3.2"/>
    </reaction>
</comment>
<comment type="cofactor">
    <cofactor evidence="1">
        <name>Mg(2+)</name>
        <dbReference type="ChEBI" id="CHEBI:18420"/>
    </cofactor>
    <text evidence="1">Binds 1 Mg(2+) ion per subunit. The magnesium ion binds only when substrate is bound.</text>
</comment>
<comment type="cofactor">
    <cofactor evidence="1">
        <name>Mn(2+)</name>
        <dbReference type="ChEBI" id="CHEBI:29035"/>
    </cofactor>
    <text evidence="1">Binds 1 Mn(2+) ion per subunit.</text>
</comment>
<comment type="pathway">
    <text evidence="1">Isoprenoid biosynthesis; dimethylallyl diphosphate biosynthesis; dimethylallyl diphosphate from isopentenyl diphosphate: step 1/1.</text>
</comment>
<comment type="subunit">
    <text evidence="1">Homodimer.</text>
</comment>
<comment type="subcellular location">
    <subcellularLocation>
        <location evidence="1">Cytoplasm</location>
    </subcellularLocation>
</comment>
<comment type="similarity">
    <text evidence="1">Belongs to the IPP isomerase type 1 family.</text>
</comment>
<sequence length="182" mass="20446">MQTEHVILLNAQGVPTGTLEKYAAHTADTLLHLAFSSWLFNAKGQLLVTRRALSKKAWPGVWTNSVCGHPQLGESNEDAVIRRCRFELGVEITAPEPVYPDFRYRATDPNGIVENEVCPVFAARTTSALQINDDEVMDYQWCDLADVLHGIDATPWAFSPWMVMQATNREARKRLSAFTQLK</sequence>
<organism>
    <name type="scientific">Escherichia coli O7:K1 (strain IAI39 / ExPEC)</name>
    <dbReference type="NCBI Taxonomy" id="585057"/>
    <lineage>
        <taxon>Bacteria</taxon>
        <taxon>Pseudomonadati</taxon>
        <taxon>Pseudomonadota</taxon>
        <taxon>Gammaproteobacteria</taxon>
        <taxon>Enterobacterales</taxon>
        <taxon>Enterobacteriaceae</taxon>
        <taxon>Escherichia</taxon>
    </lineage>
</organism>
<feature type="chain" id="PRO_1000118724" description="Isopentenyl-diphosphate Delta-isomerase">
    <location>
        <begin position="1"/>
        <end position="182"/>
    </location>
</feature>
<feature type="domain" description="Nudix hydrolase">
    <location>
        <begin position="30"/>
        <end position="164"/>
    </location>
</feature>
<feature type="active site" evidence="1">
    <location>
        <position position="67"/>
    </location>
</feature>
<feature type="active site" evidence="1">
    <location>
        <position position="116"/>
    </location>
</feature>
<feature type="binding site" evidence="1">
    <location>
        <position position="25"/>
    </location>
    <ligand>
        <name>Mn(2+)</name>
        <dbReference type="ChEBI" id="CHEBI:29035"/>
    </ligand>
</feature>
<feature type="binding site" evidence="1">
    <location>
        <position position="32"/>
    </location>
    <ligand>
        <name>Mn(2+)</name>
        <dbReference type="ChEBI" id="CHEBI:29035"/>
    </ligand>
</feature>
<feature type="binding site" evidence="1">
    <location>
        <position position="69"/>
    </location>
    <ligand>
        <name>Mn(2+)</name>
        <dbReference type="ChEBI" id="CHEBI:29035"/>
    </ligand>
</feature>
<feature type="binding site" evidence="1">
    <location>
        <position position="87"/>
    </location>
    <ligand>
        <name>Mg(2+)</name>
        <dbReference type="ChEBI" id="CHEBI:18420"/>
    </ligand>
</feature>
<feature type="binding site" evidence="1">
    <location>
        <position position="114"/>
    </location>
    <ligand>
        <name>Mn(2+)</name>
        <dbReference type="ChEBI" id="CHEBI:29035"/>
    </ligand>
</feature>
<feature type="binding site" evidence="1">
    <location>
        <position position="116"/>
    </location>
    <ligand>
        <name>Mn(2+)</name>
        <dbReference type="ChEBI" id="CHEBI:29035"/>
    </ligand>
</feature>
<evidence type="ECO:0000255" key="1">
    <source>
        <dbReference type="HAMAP-Rule" id="MF_00202"/>
    </source>
</evidence>
<protein>
    <recommendedName>
        <fullName evidence="1">Isopentenyl-diphosphate Delta-isomerase</fullName>
        <shortName evidence="1">IPP isomerase</shortName>
        <ecNumber evidence="1">5.3.3.2</ecNumber>
    </recommendedName>
    <alternativeName>
        <fullName evidence="1">IPP:DMAPP isomerase</fullName>
    </alternativeName>
    <alternativeName>
        <fullName evidence="1">Isopentenyl pyrophosphate isomerase</fullName>
    </alternativeName>
</protein>
<keyword id="KW-0963">Cytoplasm</keyword>
<keyword id="KW-0413">Isomerase</keyword>
<keyword id="KW-0414">Isoprene biosynthesis</keyword>
<keyword id="KW-0460">Magnesium</keyword>
<keyword id="KW-0464">Manganese</keyword>
<keyword id="KW-0479">Metal-binding</keyword>
<dbReference type="EC" id="5.3.3.2" evidence="1"/>
<dbReference type="EMBL" id="CU928164">
    <property type="protein sequence ID" value="CAR19423.1"/>
    <property type="molecule type" value="Genomic_DNA"/>
</dbReference>
<dbReference type="RefSeq" id="WP_001192788.1">
    <property type="nucleotide sequence ID" value="NC_011750.1"/>
</dbReference>
<dbReference type="RefSeq" id="YP_002409227.1">
    <property type="nucleotide sequence ID" value="NC_011750.1"/>
</dbReference>
<dbReference type="SMR" id="B7NW30"/>
<dbReference type="STRING" id="585057.ECIAI39_3305"/>
<dbReference type="KEGG" id="ect:ECIAI39_3305"/>
<dbReference type="PATRIC" id="fig|585057.6.peg.3427"/>
<dbReference type="HOGENOM" id="CLU_060552_2_0_6"/>
<dbReference type="UniPathway" id="UPA00059">
    <property type="reaction ID" value="UER00104"/>
</dbReference>
<dbReference type="Proteomes" id="UP000000749">
    <property type="component" value="Chromosome"/>
</dbReference>
<dbReference type="GO" id="GO:0005737">
    <property type="term" value="C:cytoplasm"/>
    <property type="evidence" value="ECO:0007669"/>
    <property type="project" value="UniProtKB-SubCell"/>
</dbReference>
<dbReference type="GO" id="GO:0004452">
    <property type="term" value="F:isopentenyl-diphosphate delta-isomerase activity"/>
    <property type="evidence" value="ECO:0007669"/>
    <property type="project" value="UniProtKB-UniRule"/>
</dbReference>
<dbReference type="GO" id="GO:0046872">
    <property type="term" value="F:metal ion binding"/>
    <property type="evidence" value="ECO:0007669"/>
    <property type="project" value="UniProtKB-KW"/>
</dbReference>
<dbReference type="GO" id="GO:0050992">
    <property type="term" value="P:dimethylallyl diphosphate biosynthetic process"/>
    <property type="evidence" value="ECO:0007669"/>
    <property type="project" value="UniProtKB-UniRule"/>
</dbReference>
<dbReference type="GO" id="GO:0008299">
    <property type="term" value="P:isoprenoid biosynthetic process"/>
    <property type="evidence" value="ECO:0007669"/>
    <property type="project" value="UniProtKB-KW"/>
</dbReference>
<dbReference type="CDD" id="cd02885">
    <property type="entry name" value="NUDIX_IPP_Isomerase"/>
    <property type="match status" value="1"/>
</dbReference>
<dbReference type="FunFam" id="3.90.79.10:FF:000009">
    <property type="entry name" value="Isopentenyl-diphosphate Delta-isomerase"/>
    <property type="match status" value="1"/>
</dbReference>
<dbReference type="Gene3D" id="3.90.79.10">
    <property type="entry name" value="Nucleoside Triphosphate Pyrophosphohydrolase"/>
    <property type="match status" value="1"/>
</dbReference>
<dbReference type="HAMAP" id="MF_00202">
    <property type="entry name" value="Idi"/>
    <property type="match status" value="1"/>
</dbReference>
<dbReference type="InterPro" id="IPR056375">
    <property type="entry name" value="Idi_bact"/>
</dbReference>
<dbReference type="InterPro" id="IPR011876">
    <property type="entry name" value="IsopentenylPP_isomerase_typ1"/>
</dbReference>
<dbReference type="InterPro" id="IPR015797">
    <property type="entry name" value="NUDIX_hydrolase-like_dom_sf"/>
</dbReference>
<dbReference type="InterPro" id="IPR000086">
    <property type="entry name" value="NUDIX_hydrolase_dom"/>
</dbReference>
<dbReference type="NCBIfam" id="TIGR02150">
    <property type="entry name" value="IPP_isom_1"/>
    <property type="match status" value="1"/>
</dbReference>
<dbReference type="NCBIfam" id="NF002995">
    <property type="entry name" value="PRK03759.1"/>
    <property type="match status" value="1"/>
</dbReference>
<dbReference type="PANTHER" id="PTHR10885">
    <property type="entry name" value="ISOPENTENYL-DIPHOSPHATE DELTA-ISOMERASE"/>
    <property type="match status" value="1"/>
</dbReference>
<dbReference type="PANTHER" id="PTHR10885:SF0">
    <property type="entry name" value="ISOPENTENYL-DIPHOSPHATE DELTA-ISOMERASE"/>
    <property type="match status" value="1"/>
</dbReference>
<dbReference type="Pfam" id="PF00293">
    <property type="entry name" value="NUDIX"/>
    <property type="match status" value="1"/>
</dbReference>
<dbReference type="PIRSF" id="PIRSF018427">
    <property type="entry name" value="Isopntndiph_ism"/>
    <property type="match status" value="1"/>
</dbReference>
<dbReference type="SUPFAM" id="SSF55811">
    <property type="entry name" value="Nudix"/>
    <property type="match status" value="1"/>
</dbReference>
<dbReference type="PROSITE" id="PS51462">
    <property type="entry name" value="NUDIX"/>
    <property type="match status" value="1"/>
</dbReference>